<dbReference type="EC" id="1.1.1.25" evidence="1"/>
<dbReference type="EMBL" id="AM286690">
    <property type="protein sequence ID" value="CAL15584.1"/>
    <property type="molecule type" value="Genomic_DNA"/>
</dbReference>
<dbReference type="RefSeq" id="WP_011587434.1">
    <property type="nucleotide sequence ID" value="NC_008260.1"/>
</dbReference>
<dbReference type="SMR" id="Q0VTD6"/>
<dbReference type="STRING" id="393595.ABO_0136"/>
<dbReference type="KEGG" id="abo:ABO_0136"/>
<dbReference type="eggNOG" id="COG0169">
    <property type="taxonomic scope" value="Bacteria"/>
</dbReference>
<dbReference type="HOGENOM" id="CLU_044063_2_1_6"/>
<dbReference type="OrthoDB" id="9776868at2"/>
<dbReference type="UniPathway" id="UPA00053">
    <property type="reaction ID" value="UER00087"/>
</dbReference>
<dbReference type="Proteomes" id="UP000008871">
    <property type="component" value="Chromosome"/>
</dbReference>
<dbReference type="GO" id="GO:0005829">
    <property type="term" value="C:cytosol"/>
    <property type="evidence" value="ECO:0007669"/>
    <property type="project" value="TreeGrafter"/>
</dbReference>
<dbReference type="GO" id="GO:0050661">
    <property type="term" value="F:NADP binding"/>
    <property type="evidence" value="ECO:0007669"/>
    <property type="project" value="InterPro"/>
</dbReference>
<dbReference type="GO" id="GO:0004764">
    <property type="term" value="F:shikimate 3-dehydrogenase (NADP+) activity"/>
    <property type="evidence" value="ECO:0007669"/>
    <property type="project" value="UniProtKB-UniRule"/>
</dbReference>
<dbReference type="GO" id="GO:0008652">
    <property type="term" value="P:amino acid biosynthetic process"/>
    <property type="evidence" value="ECO:0007669"/>
    <property type="project" value="UniProtKB-KW"/>
</dbReference>
<dbReference type="GO" id="GO:0009073">
    <property type="term" value="P:aromatic amino acid family biosynthetic process"/>
    <property type="evidence" value="ECO:0007669"/>
    <property type="project" value="UniProtKB-KW"/>
</dbReference>
<dbReference type="GO" id="GO:0009423">
    <property type="term" value="P:chorismate biosynthetic process"/>
    <property type="evidence" value="ECO:0007669"/>
    <property type="project" value="UniProtKB-UniRule"/>
</dbReference>
<dbReference type="GO" id="GO:0019632">
    <property type="term" value="P:shikimate metabolic process"/>
    <property type="evidence" value="ECO:0007669"/>
    <property type="project" value="InterPro"/>
</dbReference>
<dbReference type="CDD" id="cd01065">
    <property type="entry name" value="NAD_bind_Shikimate_DH"/>
    <property type="match status" value="1"/>
</dbReference>
<dbReference type="FunFam" id="3.40.50.10860:FF:000006">
    <property type="entry name" value="Shikimate dehydrogenase (NADP(+))"/>
    <property type="match status" value="1"/>
</dbReference>
<dbReference type="Gene3D" id="3.40.50.10860">
    <property type="entry name" value="Leucine Dehydrogenase, chain A, domain 1"/>
    <property type="match status" value="1"/>
</dbReference>
<dbReference type="Gene3D" id="3.40.50.720">
    <property type="entry name" value="NAD(P)-binding Rossmann-like Domain"/>
    <property type="match status" value="1"/>
</dbReference>
<dbReference type="HAMAP" id="MF_00222">
    <property type="entry name" value="Shikimate_DH_AroE"/>
    <property type="match status" value="1"/>
</dbReference>
<dbReference type="InterPro" id="IPR046346">
    <property type="entry name" value="Aminoacid_DH-like_N_sf"/>
</dbReference>
<dbReference type="InterPro" id="IPR036291">
    <property type="entry name" value="NAD(P)-bd_dom_sf"/>
</dbReference>
<dbReference type="InterPro" id="IPR041121">
    <property type="entry name" value="SDH_C"/>
</dbReference>
<dbReference type="InterPro" id="IPR011342">
    <property type="entry name" value="Shikimate_DH"/>
</dbReference>
<dbReference type="InterPro" id="IPR013708">
    <property type="entry name" value="Shikimate_DH-bd_N"/>
</dbReference>
<dbReference type="InterPro" id="IPR022893">
    <property type="entry name" value="Shikimate_DH_fam"/>
</dbReference>
<dbReference type="InterPro" id="IPR006151">
    <property type="entry name" value="Shikm_DH/Glu-tRNA_Rdtase"/>
</dbReference>
<dbReference type="NCBIfam" id="TIGR00507">
    <property type="entry name" value="aroE"/>
    <property type="match status" value="1"/>
</dbReference>
<dbReference type="NCBIfam" id="NF001310">
    <property type="entry name" value="PRK00258.1-2"/>
    <property type="match status" value="1"/>
</dbReference>
<dbReference type="PANTHER" id="PTHR21089:SF1">
    <property type="entry name" value="BIFUNCTIONAL 3-DEHYDROQUINATE DEHYDRATASE_SHIKIMATE DEHYDROGENASE, CHLOROPLASTIC"/>
    <property type="match status" value="1"/>
</dbReference>
<dbReference type="PANTHER" id="PTHR21089">
    <property type="entry name" value="SHIKIMATE DEHYDROGENASE"/>
    <property type="match status" value="1"/>
</dbReference>
<dbReference type="Pfam" id="PF18317">
    <property type="entry name" value="SDH_C"/>
    <property type="match status" value="1"/>
</dbReference>
<dbReference type="Pfam" id="PF01488">
    <property type="entry name" value="Shikimate_DH"/>
    <property type="match status" value="1"/>
</dbReference>
<dbReference type="Pfam" id="PF08501">
    <property type="entry name" value="Shikimate_dh_N"/>
    <property type="match status" value="1"/>
</dbReference>
<dbReference type="SUPFAM" id="SSF53223">
    <property type="entry name" value="Aminoacid dehydrogenase-like, N-terminal domain"/>
    <property type="match status" value="1"/>
</dbReference>
<dbReference type="SUPFAM" id="SSF51735">
    <property type="entry name" value="NAD(P)-binding Rossmann-fold domains"/>
    <property type="match status" value="1"/>
</dbReference>
<accession>Q0VTD6</accession>
<feature type="chain" id="PRO_0000325096" description="Shikimate dehydrogenase (NADP(+))">
    <location>
        <begin position="1"/>
        <end position="278"/>
    </location>
</feature>
<feature type="active site" description="Proton acceptor" evidence="1">
    <location>
        <position position="74"/>
    </location>
</feature>
<feature type="binding site" evidence="1">
    <location>
        <begin position="23"/>
        <end position="25"/>
    </location>
    <ligand>
        <name>shikimate</name>
        <dbReference type="ChEBI" id="CHEBI:36208"/>
    </ligand>
</feature>
<feature type="binding site" evidence="1">
    <location>
        <position position="70"/>
    </location>
    <ligand>
        <name>shikimate</name>
        <dbReference type="ChEBI" id="CHEBI:36208"/>
    </ligand>
</feature>
<feature type="binding site" evidence="1">
    <location>
        <position position="86"/>
    </location>
    <ligand>
        <name>NADP(+)</name>
        <dbReference type="ChEBI" id="CHEBI:58349"/>
    </ligand>
</feature>
<feature type="binding site" evidence="1">
    <location>
        <position position="95"/>
    </location>
    <ligand>
        <name>shikimate</name>
        <dbReference type="ChEBI" id="CHEBI:36208"/>
    </ligand>
</feature>
<feature type="binding site" evidence="1">
    <location>
        <position position="110"/>
    </location>
    <ligand>
        <name>shikimate</name>
        <dbReference type="ChEBI" id="CHEBI:36208"/>
    </ligand>
</feature>
<feature type="binding site" evidence="1">
    <location>
        <begin position="135"/>
        <end position="139"/>
    </location>
    <ligand>
        <name>NADP(+)</name>
        <dbReference type="ChEBI" id="CHEBI:58349"/>
    </ligand>
</feature>
<feature type="binding site" evidence="1">
    <location>
        <begin position="159"/>
        <end position="164"/>
    </location>
    <ligand>
        <name>NADP(+)</name>
        <dbReference type="ChEBI" id="CHEBI:58349"/>
    </ligand>
</feature>
<feature type="binding site" evidence="1">
    <location>
        <position position="224"/>
    </location>
    <ligand>
        <name>NADP(+)</name>
        <dbReference type="ChEBI" id="CHEBI:58349"/>
    </ligand>
</feature>
<feature type="binding site" evidence="1">
    <location>
        <position position="226"/>
    </location>
    <ligand>
        <name>shikimate</name>
        <dbReference type="ChEBI" id="CHEBI:36208"/>
    </ligand>
</feature>
<feature type="binding site" evidence="1">
    <location>
        <position position="248"/>
    </location>
    <ligand>
        <name>NADP(+)</name>
        <dbReference type="ChEBI" id="CHEBI:58349"/>
    </ligand>
</feature>
<name>AROE_ALCBS</name>
<protein>
    <recommendedName>
        <fullName evidence="1">Shikimate dehydrogenase (NADP(+))</fullName>
        <shortName evidence="1">SDH</shortName>
        <ecNumber evidence="1">1.1.1.25</ecNumber>
    </recommendedName>
</protein>
<keyword id="KW-0028">Amino-acid biosynthesis</keyword>
<keyword id="KW-0057">Aromatic amino acid biosynthesis</keyword>
<keyword id="KW-0521">NADP</keyword>
<keyword id="KW-0560">Oxidoreductase</keyword>
<keyword id="KW-1185">Reference proteome</keyword>
<organism>
    <name type="scientific">Alcanivorax borkumensis (strain ATCC 700651 / DSM 11573 / NCIMB 13689 / SK2)</name>
    <dbReference type="NCBI Taxonomy" id="393595"/>
    <lineage>
        <taxon>Bacteria</taxon>
        <taxon>Pseudomonadati</taxon>
        <taxon>Pseudomonadota</taxon>
        <taxon>Gammaproteobacteria</taxon>
        <taxon>Oceanospirillales</taxon>
        <taxon>Alcanivoracaceae</taxon>
        <taxon>Alcanivorax</taxon>
    </lineage>
</organism>
<proteinExistence type="inferred from homology"/>
<evidence type="ECO:0000255" key="1">
    <source>
        <dbReference type="HAMAP-Rule" id="MF_00222"/>
    </source>
</evidence>
<reference key="1">
    <citation type="journal article" date="2006" name="Nat. Biotechnol.">
        <title>Genome sequence of the ubiquitous hydrocarbon-degrading marine bacterium Alcanivorax borkumensis.</title>
        <authorList>
            <person name="Schneiker S."/>
            <person name="Martins dos Santos V.A.P."/>
            <person name="Bartels D."/>
            <person name="Bekel T."/>
            <person name="Brecht M."/>
            <person name="Buhrmester J."/>
            <person name="Chernikova T.N."/>
            <person name="Denaro R."/>
            <person name="Ferrer M."/>
            <person name="Gertler C."/>
            <person name="Goesmann A."/>
            <person name="Golyshina O.V."/>
            <person name="Kaminski F."/>
            <person name="Khachane A.N."/>
            <person name="Lang S."/>
            <person name="Linke B."/>
            <person name="McHardy A.C."/>
            <person name="Meyer F."/>
            <person name="Nechitaylo T."/>
            <person name="Puehler A."/>
            <person name="Regenhardt D."/>
            <person name="Rupp O."/>
            <person name="Sabirova J.S."/>
            <person name="Selbitschka W."/>
            <person name="Yakimov M.M."/>
            <person name="Timmis K.N."/>
            <person name="Vorhoelter F.-J."/>
            <person name="Weidner S."/>
            <person name="Kaiser O."/>
            <person name="Golyshin P.N."/>
        </authorList>
    </citation>
    <scope>NUCLEOTIDE SEQUENCE [LARGE SCALE GENOMIC DNA]</scope>
    <source>
        <strain>ATCC 700651 / DSM 11573 / NCIMB 13689 / SK2</strain>
    </source>
</reference>
<comment type="function">
    <text evidence="1">Involved in the biosynthesis of the chorismate, which leads to the biosynthesis of aromatic amino acids. Catalyzes the reversible NADPH linked reduction of 3-dehydroshikimate (DHSA) to yield shikimate (SA).</text>
</comment>
<comment type="catalytic activity">
    <reaction evidence="1">
        <text>shikimate + NADP(+) = 3-dehydroshikimate + NADPH + H(+)</text>
        <dbReference type="Rhea" id="RHEA:17737"/>
        <dbReference type="ChEBI" id="CHEBI:15378"/>
        <dbReference type="ChEBI" id="CHEBI:16630"/>
        <dbReference type="ChEBI" id="CHEBI:36208"/>
        <dbReference type="ChEBI" id="CHEBI:57783"/>
        <dbReference type="ChEBI" id="CHEBI:58349"/>
        <dbReference type="EC" id="1.1.1.25"/>
    </reaction>
</comment>
<comment type="pathway">
    <text evidence="1">Metabolic intermediate biosynthesis; chorismate biosynthesis; chorismate from D-erythrose 4-phosphate and phosphoenolpyruvate: step 4/7.</text>
</comment>
<comment type="subunit">
    <text evidence="1">Homodimer.</text>
</comment>
<comment type="similarity">
    <text evidence="1">Belongs to the shikimate dehydrogenase family.</text>
</comment>
<sequence length="278" mass="29554">MSGEKDRADTGLYCVFGNPVSHSRSPEIHHAFAAQHSDPVQYEKREAPLDDFAGAVQAFREAGGLGANVTVPFKEQAFALCDAITERADQAGAVNTLWWDGDQLHGDNTDGAGLVKDIRNNQGWTIRKKRVLILGAGGAVRGVLGPILAQEPTLLRIANRTKEKAEALAGNVMKGEGPPVLGGGLDNLMGQFDLVINAISAGLHGEMPALPDGLLAEGAVAYDMVYGSEPTPFMRWAEQQGAAATADGLGMLVEQAAEAFEIWRGWRPNTAPVMASLR</sequence>
<gene>
    <name evidence="1" type="primary">aroE</name>
    <name type="ordered locus">ABO_0136</name>
</gene>